<organism>
    <name type="scientific">Legionella pneumophila subsp. pneumophila (strain Philadelphia 1 / ATCC 33152 / DSM 7513)</name>
    <dbReference type="NCBI Taxonomy" id="272624"/>
    <lineage>
        <taxon>Bacteria</taxon>
        <taxon>Pseudomonadati</taxon>
        <taxon>Pseudomonadota</taxon>
        <taxon>Gammaproteobacteria</taxon>
        <taxon>Legionellales</taxon>
        <taxon>Legionellaceae</taxon>
        <taxon>Legionella</taxon>
    </lineage>
</organism>
<gene>
    <name evidence="1" type="primary">rpoB</name>
    <name type="ordered locus">lpg0322</name>
</gene>
<proteinExistence type="inferred from homology"/>
<comment type="function">
    <text evidence="1">DNA-dependent RNA polymerase catalyzes the transcription of DNA into RNA using the four ribonucleoside triphosphates as substrates.</text>
</comment>
<comment type="catalytic activity">
    <reaction evidence="1">
        <text>RNA(n) + a ribonucleoside 5'-triphosphate = RNA(n+1) + diphosphate</text>
        <dbReference type="Rhea" id="RHEA:21248"/>
        <dbReference type="Rhea" id="RHEA-COMP:14527"/>
        <dbReference type="Rhea" id="RHEA-COMP:17342"/>
        <dbReference type="ChEBI" id="CHEBI:33019"/>
        <dbReference type="ChEBI" id="CHEBI:61557"/>
        <dbReference type="ChEBI" id="CHEBI:140395"/>
        <dbReference type="EC" id="2.7.7.6"/>
    </reaction>
</comment>
<comment type="subunit">
    <text evidence="1">The RNAP catalytic core consists of 2 alpha, 1 beta, 1 beta' and 1 omega subunit. When a sigma factor is associated with the core the holoenzyme is formed, which can initiate transcription.</text>
</comment>
<comment type="similarity">
    <text evidence="1">Belongs to the RNA polymerase beta chain family.</text>
</comment>
<reference key="1">
    <citation type="journal article" date="2004" name="Science">
        <title>The genomic sequence of the accidental pathogen Legionella pneumophila.</title>
        <authorList>
            <person name="Chien M."/>
            <person name="Morozova I."/>
            <person name="Shi S."/>
            <person name="Sheng H."/>
            <person name="Chen J."/>
            <person name="Gomez S.M."/>
            <person name="Asamani G."/>
            <person name="Hill K."/>
            <person name="Nuara J."/>
            <person name="Feder M."/>
            <person name="Rineer J."/>
            <person name="Greenberg J.J."/>
            <person name="Steshenko V."/>
            <person name="Park S.H."/>
            <person name="Zhao B."/>
            <person name="Teplitskaya E."/>
            <person name="Edwards J.R."/>
            <person name="Pampou S."/>
            <person name="Georghiou A."/>
            <person name="Chou I.-C."/>
            <person name="Iannuccilli W."/>
            <person name="Ulz M.E."/>
            <person name="Kim D.H."/>
            <person name="Geringer-Sameth A."/>
            <person name="Goldsberry C."/>
            <person name="Morozov P."/>
            <person name="Fischer S.G."/>
            <person name="Segal G."/>
            <person name="Qu X."/>
            <person name="Rzhetsky A."/>
            <person name="Zhang P."/>
            <person name="Cayanis E."/>
            <person name="De Jong P.J."/>
            <person name="Ju J."/>
            <person name="Kalachikov S."/>
            <person name="Shuman H.A."/>
            <person name="Russo J.J."/>
        </authorList>
    </citation>
    <scope>NUCLEOTIDE SEQUENCE [LARGE SCALE GENOMIC DNA]</scope>
    <source>
        <strain>Philadelphia 1 / ATCC 33152 / DSM 7513</strain>
    </source>
</reference>
<dbReference type="EC" id="2.7.7.6" evidence="1"/>
<dbReference type="EMBL" id="AE017354">
    <property type="protein sequence ID" value="AAU26419.1"/>
    <property type="molecule type" value="Genomic_DNA"/>
</dbReference>
<dbReference type="RefSeq" id="WP_010946073.1">
    <property type="nucleotide sequence ID" value="NC_002942.5"/>
</dbReference>
<dbReference type="RefSeq" id="YP_094366.1">
    <property type="nucleotide sequence ID" value="NC_002942.5"/>
</dbReference>
<dbReference type="SMR" id="Q5ZYQ0"/>
<dbReference type="STRING" id="272624.lpg0322"/>
<dbReference type="PaxDb" id="272624-lpg0322"/>
<dbReference type="GeneID" id="57034325"/>
<dbReference type="KEGG" id="lpn:lpg0322"/>
<dbReference type="PATRIC" id="fig|272624.6.peg.329"/>
<dbReference type="eggNOG" id="COG0085">
    <property type="taxonomic scope" value="Bacteria"/>
</dbReference>
<dbReference type="HOGENOM" id="CLU_000524_4_3_6"/>
<dbReference type="OrthoDB" id="9803954at2"/>
<dbReference type="Proteomes" id="UP000000609">
    <property type="component" value="Chromosome"/>
</dbReference>
<dbReference type="GO" id="GO:0000428">
    <property type="term" value="C:DNA-directed RNA polymerase complex"/>
    <property type="evidence" value="ECO:0007669"/>
    <property type="project" value="UniProtKB-KW"/>
</dbReference>
<dbReference type="GO" id="GO:0003677">
    <property type="term" value="F:DNA binding"/>
    <property type="evidence" value="ECO:0007669"/>
    <property type="project" value="UniProtKB-UniRule"/>
</dbReference>
<dbReference type="GO" id="GO:0003899">
    <property type="term" value="F:DNA-directed RNA polymerase activity"/>
    <property type="evidence" value="ECO:0007669"/>
    <property type="project" value="UniProtKB-UniRule"/>
</dbReference>
<dbReference type="GO" id="GO:0032549">
    <property type="term" value="F:ribonucleoside binding"/>
    <property type="evidence" value="ECO:0007669"/>
    <property type="project" value="InterPro"/>
</dbReference>
<dbReference type="GO" id="GO:0006351">
    <property type="term" value="P:DNA-templated transcription"/>
    <property type="evidence" value="ECO:0007669"/>
    <property type="project" value="UniProtKB-UniRule"/>
</dbReference>
<dbReference type="CDD" id="cd00653">
    <property type="entry name" value="RNA_pol_B_RPB2"/>
    <property type="match status" value="1"/>
</dbReference>
<dbReference type="FunFam" id="2.40.50.100:FF:000006">
    <property type="entry name" value="DNA-directed RNA polymerase subunit beta"/>
    <property type="match status" value="1"/>
</dbReference>
<dbReference type="FunFam" id="2.40.50.150:FF:000001">
    <property type="entry name" value="DNA-directed RNA polymerase subunit beta"/>
    <property type="match status" value="1"/>
</dbReference>
<dbReference type="FunFam" id="3.90.1800.10:FF:000001">
    <property type="entry name" value="DNA-directed RNA polymerase subunit beta"/>
    <property type="match status" value="1"/>
</dbReference>
<dbReference type="Gene3D" id="2.40.50.100">
    <property type="match status" value="1"/>
</dbReference>
<dbReference type="Gene3D" id="2.40.50.150">
    <property type="match status" value="1"/>
</dbReference>
<dbReference type="Gene3D" id="3.90.1100.10">
    <property type="match status" value="2"/>
</dbReference>
<dbReference type="Gene3D" id="2.30.150.10">
    <property type="entry name" value="DNA-directed RNA polymerase, beta subunit, external 1 domain"/>
    <property type="match status" value="1"/>
</dbReference>
<dbReference type="Gene3D" id="2.40.270.10">
    <property type="entry name" value="DNA-directed RNA polymerase, subunit 2, domain 6"/>
    <property type="match status" value="2"/>
</dbReference>
<dbReference type="Gene3D" id="3.90.1800.10">
    <property type="entry name" value="RNA polymerase alpha subunit dimerisation domain"/>
    <property type="match status" value="1"/>
</dbReference>
<dbReference type="Gene3D" id="3.90.1110.10">
    <property type="entry name" value="RNA polymerase Rpb2, domain 2"/>
    <property type="match status" value="2"/>
</dbReference>
<dbReference type="HAMAP" id="MF_01321">
    <property type="entry name" value="RNApol_bact_RpoB"/>
    <property type="match status" value="1"/>
</dbReference>
<dbReference type="InterPro" id="IPR042107">
    <property type="entry name" value="DNA-dir_RNA_pol_bsu_ext_1_sf"/>
</dbReference>
<dbReference type="InterPro" id="IPR019462">
    <property type="entry name" value="DNA-dir_RNA_pol_bsu_external_1"/>
</dbReference>
<dbReference type="InterPro" id="IPR015712">
    <property type="entry name" value="DNA-dir_RNA_pol_su2"/>
</dbReference>
<dbReference type="InterPro" id="IPR007120">
    <property type="entry name" value="DNA-dir_RNAP_su2_dom"/>
</dbReference>
<dbReference type="InterPro" id="IPR037033">
    <property type="entry name" value="DNA-dir_RNAP_su2_hyb_sf"/>
</dbReference>
<dbReference type="InterPro" id="IPR010243">
    <property type="entry name" value="RNA_pol_bsu_bac"/>
</dbReference>
<dbReference type="InterPro" id="IPR007121">
    <property type="entry name" value="RNA_pol_bsu_CS"/>
</dbReference>
<dbReference type="InterPro" id="IPR007644">
    <property type="entry name" value="RNA_pol_bsu_protrusion"/>
</dbReference>
<dbReference type="InterPro" id="IPR007642">
    <property type="entry name" value="RNA_pol_Rpb2_2"/>
</dbReference>
<dbReference type="InterPro" id="IPR037034">
    <property type="entry name" value="RNA_pol_Rpb2_2_sf"/>
</dbReference>
<dbReference type="InterPro" id="IPR007645">
    <property type="entry name" value="RNA_pol_Rpb2_3"/>
</dbReference>
<dbReference type="InterPro" id="IPR007641">
    <property type="entry name" value="RNA_pol_Rpb2_7"/>
</dbReference>
<dbReference type="InterPro" id="IPR014724">
    <property type="entry name" value="RNA_pol_RPB2_OB-fold"/>
</dbReference>
<dbReference type="NCBIfam" id="NF001616">
    <property type="entry name" value="PRK00405.1"/>
    <property type="match status" value="1"/>
</dbReference>
<dbReference type="NCBIfam" id="TIGR02013">
    <property type="entry name" value="rpoB"/>
    <property type="match status" value="1"/>
</dbReference>
<dbReference type="PANTHER" id="PTHR20856">
    <property type="entry name" value="DNA-DIRECTED RNA POLYMERASE I SUBUNIT 2"/>
    <property type="match status" value="1"/>
</dbReference>
<dbReference type="Pfam" id="PF04563">
    <property type="entry name" value="RNA_pol_Rpb2_1"/>
    <property type="match status" value="1"/>
</dbReference>
<dbReference type="Pfam" id="PF04561">
    <property type="entry name" value="RNA_pol_Rpb2_2"/>
    <property type="match status" value="2"/>
</dbReference>
<dbReference type="Pfam" id="PF04565">
    <property type="entry name" value="RNA_pol_Rpb2_3"/>
    <property type="match status" value="1"/>
</dbReference>
<dbReference type="Pfam" id="PF10385">
    <property type="entry name" value="RNA_pol_Rpb2_45"/>
    <property type="match status" value="1"/>
</dbReference>
<dbReference type="Pfam" id="PF00562">
    <property type="entry name" value="RNA_pol_Rpb2_6"/>
    <property type="match status" value="1"/>
</dbReference>
<dbReference type="Pfam" id="PF04560">
    <property type="entry name" value="RNA_pol_Rpb2_7"/>
    <property type="match status" value="1"/>
</dbReference>
<dbReference type="SUPFAM" id="SSF64484">
    <property type="entry name" value="beta and beta-prime subunits of DNA dependent RNA-polymerase"/>
    <property type="match status" value="1"/>
</dbReference>
<dbReference type="PROSITE" id="PS01166">
    <property type="entry name" value="RNA_POL_BETA"/>
    <property type="match status" value="1"/>
</dbReference>
<accession>Q5ZYQ0</accession>
<evidence type="ECO:0000255" key="1">
    <source>
        <dbReference type="HAMAP-Rule" id="MF_01321"/>
    </source>
</evidence>
<name>RPOB_LEGPH</name>
<keyword id="KW-0240">DNA-directed RNA polymerase</keyword>
<keyword id="KW-0548">Nucleotidyltransferase</keyword>
<keyword id="KW-1185">Reference proteome</keyword>
<keyword id="KW-0804">Transcription</keyword>
<keyword id="KW-0808">Transferase</keyword>
<feature type="chain" id="PRO_0000224069" description="DNA-directed RNA polymerase subunit beta">
    <location>
        <begin position="1"/>
        <end position="1368"/>
    </location>
</feature>
<protein>
    <recommendedName>
        <fullName evidence="1">DNA-directed RNA polymerase subunit beta</fullName>
        <shortName evidence="1">RNAP subunit beta</shortName>
        <ecNumber evidence="1">2.7.7.6</ecNumber>
    </recommendedName>
    <alternativeName>
        <fullName evidence="1">RNA polymerase subunit beta</fullName>
    </alternativeName>
    <alternativeName>
        <fullName evidence="1">Transcriptase subunit beta</fullName>
    </alternativeName>
</protein>
<sequence length="1368" mass="152719">MAVAEAKPQYSHAEKKRFRKSFGKQTDIMPIPNLLEIQLKSYRDFLQTDTKLSEQLNTGLHAAFSSVFPIESFSGNARLEYVGYKLGEPAFDVRECKLRGLTYSAPLRVKIRLVVLDKDASDDPKPIKDIREQDVFMGEIPLMTDVGTFVVNGTERVVVSQLHRSPGVIFEHDKGKTHSSGKLLYSARIIPYRGSWLDFEFDPKDCVYVRIDRRRKLPVTILLRALGYEAEDILSEFFETTHCHLKNGEYHIDLIPQRLRGEIASFDIHVPETGELIVEQGRRITARHIKQMEKSQMQDLVVPRDYLIGKTLAKNIIDTSTGEFLAQANDEITEELLDAMANHGILQIDMIYTNDLDHGSYISDTLKIDPTGSQLEALVEIYRMMRPGEPPTKEAAEALFKNLFFVEERYDLSAVGRMKFNRRVGIKSDEGPGTLTKEDILSVIKTLIDIRNGIGMVDDIDHLGNRRVRSVGEMTENQFRVGLVRVERAVKERLSLVESENLMPQDLINAKPVSAAIKEFFGSSQLSQFMDQVNPLSGVTHKRRVSALGPGGLTRERAGFEVRDVHTTHYGRVCPIETPEGPNIGLINSLSVYARTNEYGFIETPCRKVVNGRVTDEVEYLSAIEEVDQYIAQSNVELDAQGNILADLVPCRHQNEFSLTTPDKINYMDVSPKQIVSVAASLIPFLEHDDANRALMGSNMQRQAVPTLRSEKPLVGTGMERIVASDSGVSVVAKRGGVIDLVDASRIVVRVNDDETTAGETGVDIYNLTKYFRSNQDTCINQRPIVSTGDRIQRGDVLADGPCTDMGELALGQNLLVAFMPWNGYNFEDSILISERIVHDDRFTTIHIEELTCIARDTKLGTEEITADIPNVGESALSNLDESGVVYIGAEVKAGDILVGKVTPKGETQLTPEEKLLRAIFGEKASDVKDSSLRVPSGMNGTVIDVQVFTRDGLEKDARAKSIEEEHLARVRKDLIDERRIREEDIYHRVSHLLLDKVATGGPGSLKPGSKITQDYLDKVEREKWFDIRIEDDAISQQLEQLSKQLELLTKEMEKRFNDSRKKIIQGDDLAPGVLKIVKVYLAVKRRIQPGDKMAGRHGNKGVISIVVPVEDMPHMEDGTAVDIVLNPLGVPSRMNIGQVLETHLGLAAKGLGRKIAQMLDEKQTPEAIKAYLEKIYNHDGVQRVNLKCLNDDELMTLADNLRAGVPMATPVFDGATEQEIKSMLQLADLPADGKTVLIDGRTGNKFDNPVTVGYMYMLKLNHLVDDKMHARSTGSYSLVTQQPLGGKAQFGGQRFGEMEVWALEAYGAAYTLQEMLTVKSDDVGGRTKIYKNIVDGDHRMDPGMPESFNVLLKEIRALGIDIELEHD</sequence>